<proteinExistence type="inferred from homology"/>
<reference key="1">
    <citation type="journal article" date="1998" name="Nature">
        <title>The complete genome of the hyperthermophilic bacterium Aquifex aeolicus.</title>
        <authorList>
            <person name="Deckert G."/>
            <person name="Warren P.V."/>
            <person name="Gaasterland T."/>
            <person name="Young W.G."/>
            <person name="Lenox A.L."/>
            <person name="Graham D.E."/>
            <person name="Overbeek R."/>
            <person name="Snead M.A."/>
            <person name="Keller M."/>
            <person name="Aujay M."/>
            <person name="Huber R."/>
            <person name="Feldman R.A."/>
            <person name="Short J.M."/>
            <person name="Olsen G.J."/>
            <person name="Swanson R.V."/>
        </authorList>
    </citation>
    <scope>NUCLEOTIDE SEQUENCE [LARGE SCALE GENOMIC DNA]</scope>
    <source>
        <strain>VF5</strain>
    </source>
</reference>
<evidence type="ECO:0000255" key="1">
    <source>
        <dbReference type="HAMAP-Rule" id="MF_00315"/>
    </source>
</evidence>
<organism>
    <name type="scientific">Aquifex aeolicus (strain VF5)</name>
    <dbReference type="NCBI Taxonomy" id="224324"/>
    <lineage>
        <taxon>Bacteria</taxon>
        <taxon>Pseudomonadati</taxon>
        <taxon>Aquificota</taxon>
        <taxon>Aquificia</taxon>
        <taxon>Aquificales</taxon>
        <taxon>Aquificaceae</taxon>
        <taxon>Aquifex</taxon>
    </lineage>
</organism>
<name>DXS_AQUAE</name>
<sequence>MLEKYEILKDYKGPFDIKNYDYETLQKLAQEVRDYIINVTSKNGGHVGPSLGVVELTIALLRVFNPPEDVIVWDIGHQGYPWKILTDRKEQFPTLRQYKGISGFLRREESIYDAFGAGHSSTSISAALGFRIGKDLKGEKEDYVIAVIGDGALTAGMAYEALNNAGHIRPDRFIVILNDNEMSISPNVGAISTYLNRIISGHFVQETRQKIKNFLQHFGETPLRIMKLTEEFLKGLISPGVIFEELGFNYIGPIDGHDIKALEDTLNNVKDIKGPVLLHVYTKKGKGYKPAEENPVKWHGVAPYKVESGEIIKKSSPPTWTSVFGKALVELAERDEKIVAITPAMREGSGLVEFAKRFPDRFFDVGIAEQHACTFAAGLAAEGLRPVAAYYSTFLQRAYDQVIHDVALQNLPVTFAIDRAGLVGDDGPTHHGVFDLSYLRCVPNMVVCAPKDEQELRDLLYTGIYSGKPFALRYPRGAAYGVPTEGFKKIEIGTWEELLEGEDCVILAVGYPVYQALRAAEKLYKEGIRVGVVNARFVKPMDEKMLRDLANRYDTFITVEDNTVVGGFGSGVLEFFAREGIMKRVINLGVPDRFIEHGKQDILRNLVGIDAEGIEKAVRDALKGGRLI</sequence>
<feature type="chain" id="PRO_0000189082" description="1-deoxy-D-xylulose-5-phosphate synthase">
    <location>
        <begin position="1"/>
        <end position="628"/>
    </location>
</feature>
<feature type="binding site" evidence="1">
    <location>
        <position position="77"/>
    </location>
    <ligand>
        <name>thiamine diphosphate</name>
        <dbReference type="ChEBI" id="CHEBI:58937"/>
    </ligand>
</feature>
<feature type="binding site" evidence="1">
    <location>
        <begin position="118"/>
        <end position="120"/>
    </location>
    <ligand>
        <name>thiamine diphosphate</name>
        <dbReference type="ChEBI" id="CHEBI:58937"/>
    </ligand>
</feature>
<feature type="binding site" evidence="1">
    <location>
        <position position="150"/>
    </location>
    <ligand>
        <name>Mg(2+)</name>
        <dbReference type="ChEBI" id="CHEBI:18420"/>
    </ligand>
</feature>
<feature type="binding site" evidence="1">
    <location>
        <begin position="151"/>
        <end position="152"/>
    </location>
    <ligand>
        <name>thiamine diphosphate</name>
        <dbReference type="ChEBI" id="CHEBI:58937"/>
    </ligand>
</feature>
<feature type="binding site" evidence="1">
    <location>
        <position position="180"/>
    </location>
    <ligand>
        <name>Mg(2+)</name>
        <dbReference type="ChEBI" id="CHEBI:18420"/>
    </ligand>
</feature>
<feature type="binding site" evidence="1">
    <location>
        <position position="180"/>
    </location>
    <ligand>
        <name>thiamine diphosphate</name>
        <dbReference type="ChEBI" id="CHEBI:58937"/>
    </ligand>
</feature>
<feature type="binding site" evidence="1">
    <location>
        <position position="288"/>
    </location>
    <ligand>
        <name>thiamine diphosphate</name>
        <dbReference type="ChEBI" id="CHEBI:58937"/>
    </ligand>
</feature>
<feature type="binding site" evidence="1">
    <location>
        <position position="369"/>
    </location>
    <ligand>
        <name>thiamine diphosphate</name>
        <dbReference type="ChEBI" id="CHEBI:58937"/>
    </ligand>
</feature>
<dbReference type="EC" id="2.2.1.7" evidence="1"/>
<dbReference type="EMBL" id="AE000657">
    <property type="protein sequence ID" value="AAC07004.1"/>
    <property type="molecule type" value="Genomic_DNA"/>
</dbReference>
<dbReference type="PIR" id="A70376">
    <property type="entry name" value="A70376"/>
</dbReference>
<dbReference type="RefSeq" id="NP_213598.1">
    <property type="nucleotide sequence ID" value="NC_000918.1"/>
</dbReference>
<dbReference type="RefSeq" id="WP_010880536.1">
    <property type="nucleotide sequence ID" value="NC_000918.1"/>
</dbReference>
<dbReference type="SMR" id="O67036"/>
<dbReference type="FunCoup" id="O67036">
    <property type="interactions" value="431"/>
</dbReference>
<dbReference type="STRING" id="224324.aq_881"/>
<dbReference type="EnsemblBacteria" id="AAC07004">
    <property type="protein sequence ID" value="AAC07004"/>
    <property type="gene ID" value="aq_881"/>
</dbReference>
<dbReference type="KEGG" id="aae:aq_881"/>
<dbReference type="PATRIC" id="fig|224324.8.peg.687"/>
<dbReference type="eggNOG" id="COG1154">
    <property type="taxonomic scope" value="Bacteria"/>
</dbReference>
<dbReference type="HOGENOM" id="CLU_009227_1_4_0"/>
<dbReference type="InParanoid" id="O67036"/>
<dbReference type="OrthoDB" id="9803371at2"/>
<dbReference type="UniPathway" id="UPA00064">
    <property type="reaction ID" value="UER00091"/>
</dbReference>
<dbReference type="Proteomes" id="UP000000798">
    <property type="component" value="Chromosome"/>
</dbReference>
<dbReference type="GO" id="GO:0005829">
    <property type="term" value="C:cytosol"/>
    <property type="evidence" value="ECO:0000318"/>
    <property type="project" value="GO_Central"/>
</dbReference>
<dbReference type="GO" id="GO:0008661">
    <property type="term" value="F:1-deoxy-D-xylulose-5-phosphate synthase activity"/>
    <property type="evidence" value="ECO:0000318"/>
    <property type="project" value="GO_Central"/>
</dbReference>
<dbReference type="GO" id="GO:0000287">
    <property type="term" value="F:magnesium ion binding"/>
    <property type="evidence" value="ECO:0007669"/>
    <property type="project" value="UniProtKB-UniRule"/>
</dbReference>
<dbReference type="GO" id="GO:0030976">
    <property type="term" value="F:thiamine pyrophosphate binding"/>
    <property type="evidence" value="ECO:0007669"/>
    <property type="project" value="UniProtKB-UniRule"/>
</dbReference>
<dbReference type="GO" id="GO:0052865">
    <property type="term" value="P:1-deoxy-D-xylulose 5-phosphate biosynthetic process"/>
    <property type="evidence" value="ECO:0007669"/>
    <property type="project" value="UniProtKB-UniPathway"/>
</dbReference>
<dbReference type="GO" id="GO:0019288">
    <property type="term" value="P:isopentenyl diphosphate biosynthetic process, methylerythritol 4-phosphate pathway"/>
    <property type="evidence" value="ECO:0000318"/>
    <property type="project" value="GO_Central"/>
</dbReference>
<dbReference type="GO" id="GO:0016114">
    <property type="term" value="P:terpenoid biosynthetic process"/>
    <property type="evidence" value="ECO:0007669"/>
    <property type="project" value="UniProtKB-UniRule"/>
</dbReference>
<dbReference type="GO" id="GO:0009228">
    <property type="term" value="P:thiamine biosynthetic process"/>
    <property type="evidence" value="ECO:0007669"/>
    <property type="project" value="UniProtKB-UniRule"/>
</dbReference>
<dbReference type="CDD" id="cd02007">
    <property type="entry name" value="TPP_DXS"/>
    <property type="match status" value="1"/>
</dbReference>
<dbReference type="CDD" id="cd07033">
    <property type="entry name" value="TPP_PYR_DXS_TK_like"/>
    <property type="match status" value="1"/>
</dbReference>
<dbReference type="FunFam" id="3.40.50.920:FF:000002">
    <property type="entry name" value="1-deoxy-D-xylulose-5-phosphate synthase"/>
    <property type="match status" value="1"/>
</dbReference>
<dbReference type="FunFam" id="3.40.50.970:FF:000005">
    <property type="entry name" value="1-deoxy-D-xylulose-5-phosphate synthase"/>
    <property type="match status" value="1"/>
</dbReference>
<dbReference type="Gene3D" id="3.40.50.920">
    <property type="match status" value="1"/>
</dbReference>
<dbReference type="Gene3D" id="3.40.50.970">
    <property type="match status" value="2"/>
</dbReference>
<dbReference type="HAMAP" id="MF_00315">
    <property type="entry name" value="DXP_synth"/>
    <property type="match status" value="1"/>
</dbReference>
<dbReference type="InterPro" id="IPR005477">
    <property type="entry name" value="Dxylulose-5-P_synthase"/>
</dbReference>
<dbReference type="InterPro" id="IPR029061">
    <property type="entry name" value="THDP-binding"/>
</dbReference>
<dbReference type="InterPro" id="IPR009014">
    <property type="entry name" value="Transketo_C/PFOR_II"/>
</dbReference>
<dbReference type="InterPro" id="IPR005475">
    <property type="entry name" value="Transketolase-like_Pyr-bd"/>
</dbReference>
<dbReference type="InterPro" id="IPR020826">
    <property type="entry name" value="Transketolase_BS"/>
</dbReference>
<dbReference type="InterPro" id="IPR033248">
    <property type="entry name" value="Transketolase_C"/>
</dbReference>
<dbReference type="InterPro" id="IPR049557">
    <property type="entry name" value="Transketolase_CS"/>
</dbReference>
<dbReference type="NCBIfam" id="TIGR00204">
    <property type="entry name" value="dxs"/>
    <property type="match status" value="1"/>
</dbReference>
<dbReference type="NCBIfam" id="NF003933">
    <property type="entry name" value="PRK05444.2-2"/>
    <property type="match status" value="1"/>
</dbReference>
<dbReference type="PANTHER" id="PTHR43322">
    <property type="entry name" value="1-D-DEOXYXYLULOSE 5-PHOSPHATE SYNTHASE-RELATED"/>
    <property type="match status" value="1"/>
</dbReference>
<dbReference type="PANTHER" id="PTHR43322:SF5">
    <property type="entry name" value="1-DEOXY-D-XYLULOSE-5-PHOSPHATE SYNTHASE, CHLOROPLASTIC"/>
    <property type="match status" value="1"/>
</dbReference>
<dbReference type="Pfam" id="PF13292">
    <property type="entry name" value="DXP_synthase_N"/>
    <property type="match status" value="1"/>
</dbReference>
<dbReference type="Pfam" id="PF02779">
    <property type="entry name" value="Transket_pyr"/>
    <property type="match status" value="1"/>
</dbReference>
<dbReference type="Pfam" id="PF02780">
    <property type="entry name" value="Transketolase_C"/>
    <property type="match status" value="1"/>
</dbReference>
<dbReference type="SMART" id="SM00861">
    <property type="entry name" value="Transket_pyr"/>
    <property type="match status" value="1"/>
</dbReference>
<dbReference type="SUPFAM" id="SSF52518">
    <property type="entry name" value="Thiamin diphosphate-binding fold (THDP-binding)"/>
    <property type="match status" value="2"/>
</dbReference>
<dbReference type="SUPFAM" id="SSF52922">
    <property type="entry name" value="TK C-terminal domain-like"/>
    <property type="match status" value="1"/>
</dbReference>
<dbReference type="PROSITE" id="PS00801">
    <property type="entry name" value="TRANSKETOLASE_1"/>
    <property type="match status" value="1"/>
</dbReference>
<dbReference type="PROSITE" id="PS00802">
    <property type="entry name" value="TRANSKETOLASE_2"/>
    <property type="match status" value="1"/>
</dbReference>
<protein>
    <recommendedName>
        <fullName evidence="1">1-deoxy-D-xylulose-5-phosphate synthase</fullName>
        <ecNumber evidence="1">2.2.1.7</ecNumber>
    </recommendedName>
    <alternativeName>
        <fullName evidence="1">1-deoxyxylulose-5-phosphate synthase</fullName>
        <shortName evidence="1">DXP synthase</shortName>
        <shortName evidence="1">DXPS</shortName>
    </alternativeName>
</protein>
<gene>
    <name evidence="1" type="primary">dxs</name>
    <name type="ordered locus">aq_881</name>
</gene>
<keyword id="KW-0414">Isoprene biosynthesis</keyword>
<keyword id="KW-0460">Magnesium</keyword>
<keyword id="KW-0479">Metal-binding</keyword>
<keyword id="KW-1185">Reference proteome</keyword>
<keyword id="KW-0784">Thiamine biosynthesis</keyword>
<keyword id="KW-0786">Thiamine pyrophosphate</keyword>
<keyword id="KW-0808">Transferase</keyword>
<comment type="function">
    <text evidence="1">Catalyzes the acyloin condensation reaction between C atoms 2 and 3 of pyruvate and glyceraldehyde 3-phosphate to yield 1-deoxy-D-xylulose-5-phosphate (DXP).</text>
</comment>
<comment type="catalytic activity">
    <reaction evidence="1">
        <text>D-glyceraldehyde 3-phosphate + pyruvate + H(+) = 1-deoxy-D-xylulose 5-phosphate + CO2</text>
        <dbReference type="Rhea" id="RHEA:12605"/>
        <dbReference type="ChEBI" id="CHEBI:15361"/>
        <dbReference type="ChEBI" id="CHEBI:15378"/>
        <dbReference type="ChEBI" id="CHEBI:16526"/>
        <dbReference type="ChEBI" id="CHEBI:57792"/>
        <dbReference type="ChEBI" id="CHEBI:59776"/>
        <dbReference type="EC" id="2.2.1.7"/>
    </reaction>
</comment>
<comment type="cofactor">
    <cofactor evidence="1">
        <name>Mg(2+)</name>
        <dbReference type="ChEBI" id="CHEBI:18420"/>
    </cofactor>
    <text evidence="1">Binds 1 Mg(2+) ion per subunit.</text>
</comment>
<comment type="cofactor">
    <cofactor evidence="1">
        <name>thiamine diphosphate</name>
        <dbReference type="ChEBI" id="CHEBI:58937"/>
    </cofactor>
    <text evidence="1">Binds 1 thiamine pyrophosphate per subunit.</text>
</comment>
<comment type="pathway">
    <text evidence="1">Metabolic intermediate biosynthesis; 1-deoxy-D-xylulose 5-phosphate biosynthesis; 1-deoxy-D-xylulose 5-phosphate from D-glyceraldehyde 3-phosphate and pyruvate: step 1/1.</text>
</comment>
<comment type="subunit">
    <text evidence="1">Homodimer.</text>
</comment>
<comment type="similarity">
    <text evidence="1">Belongs to the transketolase family. DXPS subfamily.</text>
</comment>
<accession>O67036</accession>